<organism>
    <name type="scientific">Homo sapiens</name>
    <name type="common">Human</name>
    <dbReference type="NCBI Taxonomy" id="9606"/>
    <lineage>
        <taxon>Eukaryota</taxon>
        <taxon>Metazoa</taxon>
        <taxon>Chordata</taxon>
        <taxon>Craniata</taxon>
        <taxon>Vertebrata</taxon>
        <taxon>Euteleostomi</taxon>
        <taxon>Mammalia</taxon>
        <taxon>Eutheria</taxon>
        <taxon>Euarchontoglires</taxon>
        <taxon>Primates</taxon>
        <taxon>Haplorrhini</taxon>
        <taxon>Catarrhini</taxon>
        <taxon>Hominidae</taxon>
        <taxon>Homo</taxon>
    </lineage>
</organism>
<name>ERCC5_HUMAN</name>
<accession>P28715</accession>
<accession>A6NGT4</accession>
<accession>Q5JUS4</accession>
<accession>Q5JUS5</accession>
<accession>Q7Z2V3</accession>
<accession>Q8IZL6</accession>
<accession>Q8N1B7</accession>
<accession>Q9HD59</accession>
<accession>Q9HD60</accession>
<evidence type="ECO:0000250" key="1"/>
<evidence type="ECO:0000250" key="2">
    <source>
        <dbReference type="UniProtKB" id="P35689"/>
    </source>
</evidence>
<evidence type="ECO:0000250" key="3">
    <source>
        <dbReference type="UniProtKB" id="P39748"/>
    </source>
</evidence>
<evidence type="ECO:0000256" key="4">
    <source>
        <dbReference type="SAM" id="MobiDB-lite"/>
    </source>
</evidence>
<evidence type="ECO:0000269" key="5">
    <source>
    </source>
</evidence>
<evidence type="ECO:0000269" key="6">
    <source>
    </source>
</evidence>
<evidence type="ECO:0000269" key="7">
    <source>
    </source>
</evidence>
<evidence type="ECO:0000269" key="8">
    <source>
    </source>
</evidence>
<evidence type="ECO:0000269" key="9">
    <source>
    </source>
</evidence>
<evidence type="ECO:0000269" key="10">
    <source>
    </source>
</evidence>
<evidence type="ECO:0000269" key="11">
    <source>
    </source>
</evidence>
<evidence type="ECO:0000269" key="12">
    <source>
    </source>
</evidence>
<evidence type="ECO:0000269" key="13">
    <source>
    </source>
</evidence>
<evidence type="ECO:0000269" key="14">
    <source>
    </source>
</evidence>
<evidence type="ECO:0000269" key="15">
    <source>
    </source>
</evidence>
<evidence type="ECO:0000269" key="16">
    <source>
    </source>
</evidence>
<evidence type="ECO:0000269" key="17">
    <source>
    </source>
</evidence>
<evidence type="ECO:0000269" key="18">
    <source>
    </source>
</evidence>
<evidence type="ECO:0000269" key="19">
    <source>
    </source>
</evidence>
<evidence type="ECO:0000269" key="20">
    <source>
    </source>
</evidence>
<evidence type="ECO:0000269" key="21">
    <source>
    </source>
</evidence>
<evidence type="ECO:0000269" key="22">
    <source>
    </source>
</evidence>
<evidence type="ECO:0000269" key="23">
    <source>
    </source>
</evidence>
<evidence type="ECO:0000269" key="24">
    <source>
    </source>
</evidence>
<evidence type="ECO:0000269" key="25">
    <source>
    </source>
</evidence>
<evidence type="ECO:0000269" key="26">
    <source>
    </source>
</evidence>
<evidence type="ECO:0000269" key="27">
    <source>
    </source>
</evidence>
<evidence type="ECO:0000269" key="28">
    <source>
    </source>
</evidence>
<evidence type="ECO:0000269" key="29">
    <source>
    </source>
</evidence>
<evidence type="ECO:0000269" key="30">
    <source ref="5"/>
</evidence>
<evidence type="ECO:0000269" key="31">
    <source ref="6"/>
</evidence>
<evidence type="ECO:0000305" key="32"/>
<evidence type="ECO:0000305" key="33">
    <source>
    </source>
</evidence>
<evidence type="ECO:0000305" key="34">
    <source>
    </source>
</evidence>
<evidence type="ECO:0000305" key="35">
    <source>
    </source>
</evidence>
<evidence type="ECO:0000312" key="36">
    <source>
        <dbReference type="PDB" id="6TUW"/>
    </source>
</evidence>
<evidence type="ECO:0007744" key="37">
    <source>
        <dbReference type="PDB" id="5EKF"/>
    </source>
</evidence>
<evidence type="ECO:0007744" key="38">
    <source>
        <dbReference type="PDB" id="5EKG"/>
    </source>
</evidence>
<evidence type="ECO:0007744" key="39">
    <source>
        <dbReference type="PDB" id="6TUR"/>
    </source>
</evidence>
<evidence type="ECO:0007744" key="40">
    <source>
        <dbReference type="PDB" id="6TUS"/>
    </source>
</evidence>
<evidence type="ECO:0007744" key="41">
    <source>
        <dbReference type="PDB" id="6TUW"/>
    </source>
</evidence>
<evidence type="ECO:0007744" key="42">
    <source>
        <dbReference type="PDB" id="6TUX"/>
    </source>
</evidence>
<evidence type="ECO:0007744" key="43">
    <source>
        <dbReference type="PDB" id="6VBH"/>
    </source>
</evidence>
<evidence type="ECO:0007744" key="44">
    <source>
    </source>
</evidence>
<evidence type="ECO:0007829" key="45">
    <source>
        <dbReference type="PDB" id="6TUS"/>
    </source>
</evidence>
<evidence type="ECO:0007829" key="46">
    <source>
        <dbReference type="PDB" id="6TUX"/>
    </source>
</evidence>
<evidence type="ECO:0007829" key="47">
    <source>
        <dbReference type="PDB" id="6VBH"/>
    </source>
</evidence>
<dbReference type="EC" id="3.1.-.-" evidence="17 18 20 22 23 24"/>
<dbReference type="EMBL" id="X69978">
    <property type="protein sequence ID" value="CAA49598.1"/>
    <property type="molecule type" value="mRNA"/>
</dbReference>
<dbReference type="EMBL" id="D16305">
    <property type="protein sequence ID" value="BAA03812.1"/>
    <property type="molecule type" value="mRNA"/>
</dbReference>
<dbReference type="EMBL" id="L20046">
    <property type="protein sequence ID" value="AAC37533.1"/>
    <property type="molecule type" value="mRNA"/>
</dbReference>
<dbReference type="EMBL" id="AF255436">
    <property type="protein sequence ID" value="AAF89178.1"/>
    <property type="molecule type" value="Genomic_DNA"/>
</dbReference>
<dbReference type="EMBL" id="AF255431">
    <property type="protein sequence ID" value="AAF89178.1"/>
    <property type="status" value="JOINED"/>
    <property type="molecule type" value="Genomic_DNA"/>
</dbReference>
<dbReference type="EMBL" id="AF255433">
    <property type="protein sequence ID" value="AAF89178.1"/>
    <property type="status" value="JOINED"/>
    <property type="molecule type" value="Genomic_DNA"/>
</dbReference>
<dbReference type="EMBL" id="AF255434">
    <property type="protein sequence ID" value="AAF89178.1"/>
    <property type="status" value="JOINED"/>
    <property type="molecule type" value="Genomic_DNA"/>
</dbReference>
<dbReference type="EMBL" id="AF255435">
    <property type="protein sequence ID" value="AAF89178.1"/>
    <property type="status" value="JOINED"/>
    <property type="molecule type" value="Genomic_DNA"/>
</dbReference>
<dbReference type="EMBL" id="AF255442">
    <property type="protein sequence ID" value="AAF89179.1"/>
    <property type="molecule type" value="Genomic_DNA"/>
</dbReference>
<dbReference type="EMBL" id="AF255431">
    <property type="protein sequence ID" value="AAF89179.1"/>
    <property type="status" value="JOINED"/>
    <property type="molecule type" value="Genomic_DNA"/>
</dbReference>
<dbReference type="EMBL" id="AF255433">
    <property type="protein sequence ID" value="AAF89179.1"/>
    <property type="status" value="JOINED"/>
    <property type="molecule type" value="Genomic_DNA"/>
</dbReference>
<dbReference type="EMBL" id="AF255434">
    <property type="protein sequence ID" value="AAF89179.1"/>
    <property type="status" value="JOINED"/>
    <property type="molecule type" value="Genomic_DNA"/>
</dbReference>
<dbReference type="EMBL" id="AF255435">
    <property type="protein sequence ID" value="AAF89179.1"/>
    <property type="status" value="JOINED"/>
    <property type="molecule type" value="Genomic_DNA"/>
</dbReference>
<dbReference type="EMBL" id="AF255436">
    <property type="protein sequence ID" value="AAF89179.1"/>
    <property type="status" value="JOINED"/>
    <property type="molecule type" value="Genomic_DNA"/>
</dbReference>
<dbReference type="EMBL" id="AF255437">
    <property type="protein sequence ID" value="AAF89179.1"/>
    <property type="status" value="JOINED"/>
    <property type="molecule type" value="Genomic_DNA"/>
</dbReference>
<dbReference type="EMBL" id="AF255438">
    <property type="protein sequence ID" value="AAF89179.1"/>
    <property type="status" value="JOINED"/>
    <property type="molecule type" value="Genomic_DNA"/>
</dbReference>
<dbReference type="EMBL" id="AF255439">
    <property type="protein sequence ID" value="AAF89179.1"/>
    <property type="status" value="JOINED"/>
    <property type="molecule type" value="Genomic_DNA"/>
</dbReference>
<dbReference type="EMBL" id="AF255440">
    <property type="protein sequence ID" value="AAF89179.1"/>
    <property type="status" value="JOINED"/>
    <property type="molecule type" value="Genomic_DNA"/>
</dbReference>
<dbReference type="EMBL" id="AF255441">
    <property type="protein sequence ID" value="AAF89179.1"/>
    <property type="status" value="JOINED"/>
    <property type="molecule type" value="Genomic_DNA"/>
</dbReference>
<dbReference type="EMBL" id="AF462447">
    <property type="protein sequence ID" value="AAP97715.1"/>
    <property type="molecule type" value="mRNA"/>
</dbReference>
<dbReference type="EMBL" id="AF550128">
    <property type="protein sequence ID" value="AAN46091.1"/>
    <property type="molecule type" value="Genomic_DNA"/>
</dbReference>
<dbReference type="EMBL" id="AL157769">
    <property type="status" value="NOT_ANNOTATED_CDS"/>
    <property type="molecule type" value="Genomic_DNA"/>
</dbReference>
<dbReference type="EMBL" id="BC031522">
    <property type="protein sequence ID" value="AAH31522.1"/>
    <property type="molecule type" value="mRNA"/>
</dbReference>
<dbReference type="EMBL" id="X71341">
    <property type="protein sequence ID" value="CAA50481.1"/>
    <property type="molecule type" value="Genomic_DNA"/>
</dbReference>
<dbReference type="EMBL" id="X71342">
    <property type="protein sequence ID" value="CAA50481.1"/>
    <property type="status" value="JOINED"/>
    <property type="molecule type" value="Genomic_DNA"/>
</dbReference>
<dbReference type="CCDS" id="CCDS32004.1">
    <molecule id="P28715-1"/>
</dbReference>
<dbReference type="PIR" id="I58009">
    <property type="entry name" value="I58009"/>
</dbReference>
<dbReference type="PIR" id="S35993">
    <property type="entry name" value="S35993"/>
</dbReference>
<dbReference type="RefSeq" id="NP_000114.2">
    <molecule id="P28715-1"/>
    <property type="nucleotide sequence ID" value="NM_000123.3"/>
</dbReference>
<dbReference type="PDB" id="5EKF">
    <property type="method" value="X-ray"/>
    <property type="resolution" value="2.00 A"/>
    <property type="chains" value="B/C=1054-1077"/>
</dbReference>
<dbReference type="PDB" id="5EKG">
    <property type="method" value="X-ray"/>
    <property type="resolution" value="2.80 A"/>
    <property type="chains" value="B/C=1168-1186"/>
</dbReference>
<dbReference type="PDB" id="6TUR">
    <property type="method" value="X-ray"/>
    <property type="resolution" value="2.90 A"/>
    <property type="chains" value="AAA/BBB/CCC/DDD=1-747, AAA/BBB/CCC/DDD=750-990"/>
</dbReference>
<dbReference type="PDB" id="6TUS">
    <property type="method" value="X-ray"/>
    <property type="resolution" value="2.50 A"/>
    <property type="chains" value="A/B=1-747, A/B=750-990"/>
</dbReference>
<dbReference type="PDB" id="6TUW">
    <property type="method" value="X-ray"/>
    <property type="resolution" value="3.50 A"/>
    <property type="chains" value="A=1-747, A=750-990"/>
</dbReference>
<dbReference type="PDB" id="6TUX">
    <property type="method" value="X-ray"/>
    <property type="resolution" value="3.10 A"/>
    <property type="chains" value="A/B=1-747, A/B=750-986"/>
</dbReference>
<dbReference type="PDB" id="6VBH">
    <property type="method" value="X-ray"/>
    <property type="resolution" value="2.00 A"/>
    <property type="chains" value="A=766-987"/>
</dbReference>
<dbReference type="PDBsum" id="5EKF"/>
<dbReference type="PDBsum" id="5EKG"/>
<dbReference type="PDBsum" id="6TUR"/>
<dbReference type="PDBsum" id="6TUS"/>
<dbReference type="PDBsum" id="6TUW"/>
<dbReference type="PDBsum" id="6TUX"/>
<dbReference type="PDBsum" id="6VBH"/>
<dbReference type="SMR" id="P28715"/>
<dbReference type="BioGRID" id="108385">
    <property type="interactions" value="60"/>
</dbReference>
<dbReference type="CORUM" id="P28715"/>
<dbReference type="DIP" id="DIP-750N"/>
<dbReference type="ELM" id="P28715"/>
<dbReference type="FunCoup" id="P28715">
    <property type="interactions" value="2642"/>
</dbReference>
<dbReference type="IntAct" id="P28715">
    <property type="interactions" value="49"/>
</dbReference>
<dbReference type="STRING" id="9606.ENSP00000498881"/>
<dbReference type="BindingDB" id="P28715"/>
<dbReference type="ChEMBL" id="CHEMBL4736"/>
<dbReference type="GlyCosmos" id="P28715">
    <property type="glycosylation" value="2 sites, 1 glycan"/>
</dbReference>
<dbReference type="GlyGen" id="P28715">
    <property type="glycosylation" value="2 sites, 1 O-linked glycan (2 sites)"/>
</dbReference>
<dbReference type="iPTMnet" id="P28715"/>
<dbReference type="PhosphoSitePlus" id="P28715"/>
<dbReference type="BioMuta" id="ERCC5"/>
<dbReference type="DMDM" id="205371791"/>
<dbReference type="jPOST" id="P28715"/>
<dbReference type="MassIVE" id="P28715"/>
<dbReference type="PaxDb" id="9606-ENSP00000347978"/>
<dbReference type="PeptideAtlas" id="P28715"/>
<dbReference type="ProteomicsDB" id="54495">
    <molecule id="P28715-1"/>
</dbReference>
<dbReference type="ProteomicsDB" id="54496">
    <molecule id="P28715-2"/>
</dbReference>
<dbReference type="ProteomicsDB" id="81837"/>
<dbReference type="Pumba" id="P28715"/>
<dbReference type="Antibodypedia" id="11224">
    <property type="antibodies" value="381 antibodies from 30 providers"/>
</dbReference>
<dbReference type="DNASU" id="2073"/>
<dbReference type="Ensembl" id="ENST00000652225.2">
    <molecule id="P28715-1"/>
    <property type="protein sequence ID" value="ENSP00000498881.2"/>
    <property type="gene ID" value="ENSG00000134899.24"/>
</dbReference>
<dbReference type="GeneID" id="2073"/>
<dbReference type="KEGG" id="hsa:2073"/>
<dbReference type="MANE-Select" id="ENST00000652225.2">
    <property type="protein sequence ID" value="ENSP00000498881.2"/>
    <property type="RefSeq nucleotide sequence ID" value="NM_000123.4"/>
    <property type="RefSeq protein sequence ID" value="NP_000114.3"/>
</dbReference>
<dbReference type="UCSC" id="uc001vpw.4">
    <molecule id="P28715-1"/>
    <property type="organism name" value="human"/>
</dbReference>
<dbReference type="AGR" id="HGNC:3437"/>
<dbReference type="CTD" id="2073"/>
<dbReference type="DisGeNET" id="2073"/>
<dbReference type="GeneCards" id="ERCC5"/>
<dbReference type="GeneReviews" id="ERCC5"/>
<dbReference type="HGNC" id="HGNC:3437">
    <property type="gene designation" value="ERCC5"/>
</dbReference>
<dbReference type="HPA" id="ENSG00000134899">
    <property type="expression patterns" value="Low tissue specificity"/>
</dbReference>
<dbReference type="MalaCards" id="ERCC5"/>
<dbReference type="MIM" id="133530">
    <property type="type" value="gene"/>
</dbReference>
<dbReference type="MIM" id="278780">
    <property type="type" value="phenotype"/>
</dbReference>
<dbReference type="MIM" id="616570">
    <property type="type" value="phenotype"/>
</dbReference>
<dbReference type="neXtProt" id="NX_P28715"/>
<dbReference type="OpenTargets" id="ENSG00000134899"/>
<dbReference type="Orphanet" id="1466">
    <property type="disease" value="COFS syndrome"/>
</dbReference>
<dbReference type="Orphanet" id="910">
    <property type="disease" value="Xeroderma pigmentosum"/>
</dbReference>
<dbReference type="Orphanet" id="220295">
    <property type="disease" value="Xeroderma pigmentosum-Cockayne syndrome complex"/>
</dbReference>
<dbReference type="PharmGKB" id="PA27851"/>
<dbReference type="VEuPathDB" id="HostDB:ENSG00000134899"/>
<dbReference type="eggNOG" id="KOG2520">
    <property type="taxonomic scope" value="Eukaryota"/>
</dbReference>
<dbReference type="GeneTree" id="ENSGT00510000048601"/>
<dbReference type="HOGENOM" id="CLU_003018_2_0_1"/>
<dbReference type="InParanoid" id="P28715"/>
<dbReference type="OMA" id="KNEPANP"/>
<dbReference type="OrthoDB" id="31113at2759"/>
<dbReference type="PAN-GO" id="P28715">
    <property type="GO annotations" value="4 GO annotations based on evolutionary models"/>
</dbReference>
<dbReference type="PhylomeDB" id="P28715"/>
<dbReference type="TreeFam" id="TF101235"/>
<dbReference type="PathwayCommons" id="P28715"/>
<dbReference type="Reactome" id="R-HSA-5696395">
    <property type="pathway name" value="Formation of Incision Complex in GG-NER"/>
</dbReference>
<dbReference type="Reactome" id="R-HSA-5696400">
    <property type="pathway name" value="Dual Incision in GG-NER"/>
</dbReference>
<dbReference type="Reactome" id="R-HSA-6782135">
    <property type="pathway name" value="Dual incision in TC-NER"/>
</dbReference>
<dbReference type="SignaLink" id="P28715"/>
<dbReference type="SIGNOR" id="P28715"/>
<dbReference type="BioGRID-ORCS" id="2073">
    <property type="hits" value="25 hits in 1163 CRISPR screens"/>
</dbReference>
<dbReference type="EvolutionaryTrace" id="P28715"/>
<dbReference type="GeneWiki" id="ERCC5"/>
<dbReference type="GenomeRNAi" id="2073"/>
<dbReference type="Pharos" id="P28715">
    <property type="development level" value="Tchem"/>
</dbReference>
<dbReference type="PRO" id="PR:P28715"/>
<dbReference type="Proteomes" id="UP000005640">
    <property type="component" value="Chromosome 13"/>
</dbReference>
<dbReference type="RNAct" id="P28715">
    <property type="molecule type" value="protein"/>
</dbReference>
<dbReference type="Bgee" id="ENSG00000134899">
    <property type="expression patterns" value="Expressed in granulocyte and 99 other cell types or tissues"/>
</dbReference>
<dbReference type="ExpressionAtlas" id="P28715">
    <property type="expression patterns" value="baseline and differential"/>
</dbReference>
<dbReference type="GO" id="GO:0005694">
    <property type="term" value="C:chromosome"/>
    <property type="evidence" value="ECO:0007669"/>
    <property type="project" value="UniProtKB-SubCell"/>
</dbReference>
<dbReference type="GO" id="GO:0005654">
    <property type="term" value="C:nucleoplasm"/>
    <property type="evidence" value="ECO:0000304"/>
    <property type="project" value="Reactome"/>
</dbReference>
<dbReference type="GO" id="GO:0000109">
    <property type="term" value="C:nucleotide-excision repair complex"/>
    <property type="evidence" value="ECO:0000314"/>
    <property type="project" value="UniProtKB"/>
</dbReference>
<dbReference type="GO" id="GO:0005634">
    <property type="term" value="C:nucleus"/>
    <property type="evidence" value="ECO:0000314"/>
    <property type="project" value="UniProtKB"/>
</dbReference>
<dbReference type="GO" id="GO:0032991">
    <property type="term" value="C:protein-containing complex"/>
    <property type="evidence" value="ECO:0000314"/>
    <property type="project" value="UniProtKB"/>
</dbReference>
<dbReference type="GO" id="GO:0000405">
    <property type="term" value="F:bubble DNA binding"/>
    <property type="evidence" value="ECO:0000314"/>
    <property type="project" value="UniProtKB"/>
</dbReference>
<dbReference type="GO" id="GO:0003684">
    <property type="term" value="F:damaged DNA binding"/>
    <property type="evidence" value="ECO:0000314"/>
    <property type="project" value="UniProtKB"/>
</dbReference>
<dbReference type="GO" id="GO:0004520">
    <property type="term" value="F:DNA endonuclease activity"/>
    <property type="evidence" value="ECO:0000314"/>
    <property type="project" value="UniProtKB"/>
</dbReference>
<dbReference type="GO" id="GO:0003690">
    <property type="term" value="F:double-stranded DNA binding"/>
    <property type="evidence" value="ECO:0000314"/>
    <property type="project" value="UniProtKB"/>
</dbReference>
<dbReference type="GO" id="GO:0004519">
    <property type="term" value="F:endonuclease activity"/>
    <property type="evidence" value="ECO:0000314"/>
    <property type="project" value="UniProtKB"/>
</dbReference>
<dbReference type="GO" id="GO:0008047">
    <property type="term" value="F:enzyme activator activity"/>
    <property type="evidence" value="ECO:0000314"/>
    <property type="project" value="UniProtKB"/>
</dbReference>
<dbReference type="GO" id="GO:0046872">
    <property type="term" value="F:metal ion binding"/>
    <property type="evidence" value="ECO:0007669"/>
    <property type="project" value="UniProtKB-KW"/>
</dbReference>
<dbReference type="GO" id="GO:0042803">
    <property type="term" value="F:protein homodimerization activity"/>
    <property type="evidence" value="ECO:0000353"/>
    <property type="project" value="UniProtKB"/>
</dbReference>
<dbReference type="GO" id="GO:0044877">
    <property type="term" value="F:protein-containing complex binding"/>
    <property type="evidence" value="ECO:0000314"/>
    <property type="project" value="UniProtKB"/>
</dbReference>
<dbReference type="GO" id="GO:0000993">
    <property type="term" value="F:RNA polymerase II complex binding"/>
    <property type="evidence" value="ECO:0000314"/>
    <property type="project" value="UniProtKB"/>
</dbReference>
<dbReference type="GO" id="GO:0003697">
    <property type="term" value="F:single-stranded DNA binding"/>
    <property type="evidence" value="ECO:0000314"/>
    <property type="project" value="UniProtKB"/>
</dbReference>
<dbReference type="GO" id="GO:0006285">
    <property type="term" value="P:base-excision repair, AP site formation"/>
    <property type="evidence" value="ECO:0000314"/>
    <property type="project" value="UniProtKB"/>
</dbReference>
<dbReference type="GO" id="GO:0000724">
    <property type="term" value="P:double-strand break repair via homologous recombination"/>
    <property type="evidence" value="ECO:0000315"/>
    <property type="project" value="UniProtKB"/>
</dbReference>
<dbReference type="GO" id="GO:0043066">
    <property type="term" value="P:negative regulation of apoptotic process"/>
    <property type="evidence" value="ECO:0000315"/>
    <property type="project" value="UniProtKB"/>
</dbReference>
<dbReference type="GO" id="GO:0006289">
    <property type="term" value="P:nucleotide-excision repair"/>
    <property type="evidence" value="ECO:0000314"/>
    <property type="project" value="UniProtKB"/>
</dbReference>
<dbReference type="GO" id="GO:0009411">
    <property type="term" value="P:response to UV"/>
    <property type="evidence" value="ECO:0000314"/>
    <property type="project" value="UniProtKB"/>
</dbReference>
<dbReference type="GO" id="GO:0010225">
    <property type="term" value="P:response to UV-C"/>
    <property type="evidence" value="ECO:0000315"/>
    <property type="project" value="UniProtKB"/>
</dbReference>
<dbReference type="GO" id="GO:0006283">
    <property type="term" value="P:transcription-coupled nucleotide-excision repair"/>
    <property type="evidence" value="ECO:0000315"/>
    <property type="project" value="UniProtKB"/>
</dbReference>
<dbReference type="CDD" id="cd09904">
    <property type="entry name" value="H3TH_XPG"/>
    <property type="match status" value="1"/>
</dbReference>
<dbReference type="CDD" id="cd09868">
    <property type="entry name" value="PIN_XPG_RAD2"/>
    <property type="match status" value="2"/>
</dbReference>
<dbReference type="FunFam" id="3.40.50.1010:FF:000023">
    <property type="entry name" value="DNA repair protein complementing XP-G cells"/>
    <property type="match status" value="1"/>
</dbReference>
<dbReference type="FunFam" id="1.10.150.20:FF:000037">
    <property type="entry name" value="DNA repair protein complementing XP-G cells homolog"/>
    <property type="match status" value="1"/>
</dbReference>
<dbReference type="FunFam" id="3.40.50.1010:FF:000022">
    <property type="entry name" value="DNA repair protein complementing XP-G cells homolog"/>
    <property type="match status" value="1"/>
</dbReference>
<dbReference type="Gene3D" id="1.10.150.20">
    <property type="entry name" value="5' to 3' exonuclease, C-terminal subdomain"/>
    <property type="match status" value="1"/>
</dbReference>
<dbReference type="Gene3D" id="3.40.50.1010">
    <property type="entry name" value="5'-nuclease"/>
    <property type="match status" value="2"/>
</dbReference>
<dbReference type="InterPro" id="IPR036279">
    <property type="entry name" value="5-3_exonuclease_C_sf"/>
</dbReference>
<dbReference type="InterPro" id="IPR008918">
    <property type="entry name" value="HhH2"/>
</dbReference>
<dbReference type="InterPro" id="IPR029060">
    <property type="entry name" value="PIN-like_dom_sf"/>
</dbReference>
<dbReference type="InterPro" id="IPR006086">
    <property type="entry name" value="XPG-I_dom"/>
</dbReference>
<dbReference type="InterPro" id="IPR006084">
    <property type="entry name" value="XPG/Rad2"/>
</dbReference>
<dbReference type="InterPro" id="IPR001044">
    <property type="entry name" value="XPG/Rad2_eukaryotes"/>
</dbReference>
<dbReference type="InterPro" id="IPR019974">
    <property type="entry name" value="XPG_CS"/>
</dbReference>
<dbReference type="InterPro" id="IPR006085">
    <property type="entry name" value="XPG_DNA_repair_N"/>
</dbReference>
<dbReference type="NCBIfam" id="TIGR00600">
    <property type="entry name" value="rad2"/>
    <property type="match status" value="1"/>
</dbReference>
<dbReference type="PANTHER" id="PTHR16171:SF11">
    <property type="entry name" value="DNA EXCISION REPAIR PROTEIN ERCC-5"/>
    <property type="match status" value="1"/>
</dbReference>
<dbReference type="PANTHER" id="PTHR16171">
    <property type="entry name" value="DNA REPAIR PROTEIN COMPLEMENTING XP-G CELLS-RELATED"/>
    <property type="match status" value="1"/>
</dbReference>
<dbReference type="Pfam" id="PF00867">
    <property type="entry name" value="XPG_I"/>
    <property type="match status" value="1"/>
</dbReference>
<dbReference type="Pfam" id="PF00752">
    <property type="entry name" value="XPG_N"/>
    <property type="match status" value="1"/>
</dbReference>
<dbReference type="PRINTS" id="PR00853">
    <property type="entry name" value="XPGRADSUPER"/>
</dbReference>
<dbReference type="PRINTS" id="PR00066">
    <property type="entry name" value="XRODRMPGMNTG"/>
</dbReference>
<dbReference type="SMART" id="SM00279">
    <property type="entry name" value="HhH2"/>
    <property type="match status" value="1"/>
</dbReference>
<dbReference type="SMART" id="SM00484">
    <property type="entry name" value="XPGI"/>
    <property type="match status" value="1"/>
</dbReference>
<dbReference type="SMART" id="SM00485">
    <property type="entry name" value="XPGN"/>
    <property type="match status" value="1"/>
</dbReference>
<dbReference type="SUPFAM" id="SSF47807">
    <property type="entry name" value="5' to 3' exonuclease, C-terminal subdomain"/>
    <property type="match status" value="1"/>
</dbReference>
<dbReference type="SUPFAM" id="SSF88723">
    <property type="entry name" value="PIN domain-like"/>
    <property type="match status" value="1"/>
</dbReference>
<dbReference type="PROSITE" id="PS00841">
    <property type="entry name" value="XPG_1"/>
    <property type="match status" value="1"/>
</dbReference>
<dbReference type="PROSITE" id="PS00842">
    <property type="entry name" value="XPG_2"/>
    <property type="match status" value="1"/>
</dbReference>
<sequence length="1186" mass="133108">MGVQGLWKLLECSGRQVSPEALEGKILAVDISIWLNQALKGVRDRHGNSIENPHLLTLFHRLCKLLFFRIRPIFVFDGDAPLLKKQTLVKRRQRKDLASSDSRKTTEKLLKTFLKRQAIKTAFRSKRDEALPSLTQVRRENDLYVLPPLQEEEKHSSEEEDEKEWQERMNQKQALQEEFFHNPQAIDIESEDFSSLPPEVKHEILTDMKEFTKRRRTLFEAMPEESDDFSQYQLKGLLKKNYLNQHIEHVQKEMNQQHSGHIRRQYEDEGGFLKEVESRRVVSEDTSHYILIKGIQAKTVAEVDSESLPSSSKMHGMSFDVKSSPCEKLKTEKEPDATPPSPRTLLAMQAALLGSSSEEELESENRRQARGRNAPAAVDEGSISPRTLSAIKRALDDDEDVKVCAGDDVQTGGPGAEEMRINSSTENSDEGLKVRDGKGIPFTATLASSSVNSAEEHVASTNEGREPTDSVPKEQMSLVHVGTEAFPISDESMIKDRKDRLPLESAVVRHSDAPGLPNGRELTPASPTCTNSVSKNETHAEVLEQQNELCPYESKFDSSLLSSDDETKCKPNSASEVIGPVSLQETSSIVSVPSEAVDNVENVVSFNAKEHENFLETIQEQQTTESAGQDLISIPKAVEPMEIDSEESESDGSFIEVQSVISDEELQAEFPETSKPPSEQGEEELVGTREGEAPAESESLLRDNSERDDVDGEPQEAEKDAEDSLHEWQDINLEELETLESNLLAQQNSLKAQKQQQERIAATVTGQMFLESQELLRLFGIPYIQAPMEAEAQCAILDLTDQTSGTITDDSDIWLFGARHVYRNFFNKNKFVEYYQYVDFHNQLGLDRNKLINLAYLLGSDYTEGIPTVGCVTAMEILNEFPGHGLEPLLKFSEWWHEAQKNPKIRPNPHDTKVKKKLRTLQLTPGFPNPAVAEAYLKPVVDDSKGSFLWGKPDLDKIREFCQRYFGWNRTKTDESLFPVLKQLDAQQTQLRIDSFFRLAQQEKEDAKRIKSQRLNRAVTCMLRKEKEAAASEIEAVSVAMEKEFELLDKAKGKTQKRGITNTLEESSSLKRKRLSDSKGKNTCGGFLGETCLSESSDGSSSEDAESSSLMNVQRRTAAKEPKTSASDSQNSVKEAPVKNGGATTSSSSDSDDDGGKEKMVLVTARSVFGKKRRKLRRARGRKRKT</sequence>
<gene>
    <name type="primary">ERCC5</name>
    <name type="synonym">ERCM2</name>
    <name type="synonym">XPG</name>
    <name type="synonym">XPGC</name>
</gene>
<reference key="1">
    <citation type="journal article" date="1993" name="Nature">
        <title>Complementation of the DNA repair defect in Xeroderma pigmentosum group G cells by a human cDNA related to yeast RAD2.</title>
        <authorList>
            <person name="Scherly D."/>
            <person name="Nouspikel T."/>
            <person name="Corlet J."/>
            <person name="Ucla C."/>
            <person name="Bairoch A."/>
            <person name="Clarkson S.G."/>
        </authorList>
    </citation>
    <scope>NUCLEOTIDE SEQUENCE [MRNA] (ISOFORM 1)</scope>
    <scope>VARIANTS ARG-1053; ARG-1080 AND HIS-1104</scope>
</reference>
<reference key="2">
    <citation type="journal article" date="1994" name="Mutat. Res.">
        <title>An ERCC5 gene with homology to yeast RAD2 is involved in group G Xeroderma pigmentosum.</title>
        <authorList>
            <person name="Shiomi T."/>
            <person name="Harada Y.-N."/>
            <person name="Saito T."/>
            <person name="Shiomi N."/>
            <person name="Okuno Y."/>
            <person name="Yamaizumi M."/>
        </authorList>
    </citation>
    <scope>NUCLEOTIDE SEQUENCE [MRNA] (ISOFORM 1)</scope>
    <scope>VARIANTS VAL-254; ARG-1053 AND ARG-1080</scope>
</reference>
<reference key="3">
    <citation type="journal article" date="1993" name="Mol. Cell. Biol.">
        <title>Human ERCC5 cDNA-cosmid complementation for excision repair and bipartite amino acid domains conserved with RAD proteins of Saccharomyces cerevisiae and Schizosaccharomyces pombe.</title>
        <authorList>
            <person name="Macinnes M.A."/>
            <person name="Dickson J.A."/>
            <person name="Hernandez R.R."/>
            <person name="Learmonth D."/>
            <person name="Lin G.Y."/>
            <person name="Mudgett J.S."/>
            <person name="Park M.S."/>
            <person name="Schauer S."/>
            <person name="Reynolds R.J."/>
            <person name="Strniste G.F."/>
            <person name="Yu J.Y."/>
        </authorList>
    </citation>
    <scope>NUCLEOTIDE SEQUENCE [MRNA] (ISOFORM 1)</scope>
    <scope>VARIANTS VAL-254; ARG-1053 AND ARG-1080</scope>
</reference>
<reference key="4">
    <citation type="journal article" date="2001" name="Nucleic Acids Res.">
        <title>The human XPG gene: gene architecture, alternative splicing and single nucleotide polymorphisms.</title>
        <authorList>
            <person name="Emmert S."/>
            <person name="Schneider T.D."/>
            <person name="Khan S.G."/>
            <person name="Kraemer K.H."/>
        </authorList>
    </citation>
    <scope>NUCLEOTIDE SEQUENCE [GENOMIC DNA]</scope>
    <scope>ALTERNATIVE SPLICING (ISOFORMS 1 AND 3)</scope>
</reference>
<reference key="5">
    <citation type="submission" date="2001-12" db="EMBL/GenBank/DDBJ databases">
        <authorList>
            <person name="Zan Q."/>
            <person name="Guo J.H."/>
            <person name="Yu L."/>
        </authorList>
    </citation>
    <scope>NUCLEOTIDE SEQUENCE [LARGE SCALE MRNA] (ISOFORM 1)</scope>
    <scope>VARIANTS VAL-254; ARG-1053 AND ARG-1080</scope>
    <source>
        <tissue>Bone marrow</tissue>
    </source>
</reference>
<reference key="6">
    <citation type="submission" date="2002-10" db="EMBL/GenBank/DDBJ databases">
        <authorList>
            <consortium name="NIEHS SNPs program"/>
        </authorList>
    </citation>
    <scope>NUCLEOTIDE SEQUENCE [GENOMIC DNA]</scope>
    <scope>VARIANTS ARG-181; VAL-254; ARG-256; CYS-311; LYS-399; SER-529; ILE-590; LEU-597; SER-879; HIS-1009 AND ARG-1053; ARG-1080 AND GLN-1080</scope>
</reference>
<reference key="7">
    <citation type="journal article" date="2004" name="Nature">
        <title>The DNA sequence and analysis of human chromosome 13.</title>
        <authorList>
            <person name="Dunham A."/>
            <person name="Matthews L.H."/>
            <person name="Burton J."/>
            <person name="Ashurst J.L."/>
            <person name="Howe K.L."/>
            <person name="Ashcroft K.J."/>
            <person name="Beare D.M."/>
            <person name="Burford D.C."/>
            <person name="Hunt S.E."/>
            <person name="Griffiths-Jones S."/>
            <person name="Jones M.C."/>
            <person name="Keenan S.J."/>
            <person name="Oliver K."/>
            <person name="Scott C.E."/>
            <person name="Ainscough R."/>
            <person name="Almeida J.P."/>
            <person name="Ambrose K.D."/>
            <person name="Andrews D.T."/>
            <person name="Ashwell R.I.S."/>
            <person name="Babbage A.K."/>
            <person name="Bagguley C.L."/>
            <person name="Bailey J."/>
            <person name="Bannerjee R."/>
            <person name="Barlow K.F."/>
            <person name="Bates K."/>
            <person name="Beasley H."/>
            <person name="Bird C.P."/>
            <person name="Bray-Allen S."/>
            <person name="Brown A.J."/>
            <person name="Brown J.Y."/>
            <person name="Burrill W."/>
            <person name="Carder C."/>
            <person name="Carter N.P."/>
            <person name="Chapman J.C."/>
            <person name="Clamp M.E."/>
            <person name="Clark S.Y."/>
            <person name="Clarke G."/>
            <person name="Clee C.M."/>
            <person name="Clegg S.C."/>
            <person name="Cobley V."/>
            <person name="Collins J.E."/>
            <person name="Corby N."/>
            <person name="Coville G.J."/>
            <person name="Deloukas P."/>
            <person name="Dhami P."/>
            <person name="Dunham I."/>
            <person name="Dunn M."/>
            <person name="Earthrowl M.E."/>
            <person name="Ellington A.G."/>
            <person name="Faulkner L."/>
            <person name="Frankish A.G."/>
            <person name="Frankland J."/>
            <person name="French L."/>
            <person name="Garner P."/>
            <person name="Garnett J."/>
            <person name="Gilbert J.G.R."/>
            <person name="Gilson C.J."/>
            <person name="Ghori J."/>
            <person name="Grafham D.V."/>
            <person name="Gribble S.M."/>
            <person name="Griffiths C."/>
            <person name="Hall R.E."/>
            <person name="Hammond S."/>
            <person name="Harley J.L."/>
            <person name="Hart E.A."/>
            <person name="Heath P.D."/>
            <person name="Howden P.J."/>
            <person name="Huckle E.J."/>
            <person name="Hunt P.J."/>
            <person name="Hunt A.R."/>
            <person name="Johnson C."/>
            <person name="Johnson D."/>
            <person name="Kay M."/>
            <person name="Kimberley A.M."/>
            <person name="King A."/>
            <person name="Laird G.K."/>
            <person name="Langford C.J."/>
            <person name="Lawlor S."/>
            <person name="Leongamornlert D.A."/>
            <person name="Lloyd D.M."/>
            <person name="Lloyd C."/>
            <person name="Loveland J.E."/>
            <person name="Lovell J."/>
            <person name="Martin S."/>
            <person name="Mashreghi-Mohammadi M."/>
            <person name="McLaren S.J."/>
            <person name="McMurray A."/>
            <person name="Milne S."/>
            <person name="Moore M.J.F."/>
            <person name="Nickerson T."/>
            <person name="Palmer S.A."/>
            <person name="Pearce A.V."/>
            <person name="Peck A.I."/>
            <person name="Pelan S."/>
            <person name="Phillimore B."/>
            <person name="Porter K.M."/>
            <person name="Rice C.M."/>
            <person name="Searle S."/>
            <person name="Sehra H.K."/>
            <person name="Shownkeen R."/>
            <person name="Skuce C.D."/>
            <person name="Smith M."/>
            <person name="Steward C.A."/>
            <person name="Sycamore N."/>
            <person name="Tester J."/>
            <person name="Thomas D.W."/>
            <person name="Tracey A."/>
            <person name="Tromans A."/>
            <person name="Tubby B."/>
            <person name="Wall M."/>
            <person name="Wallis J.M."/>
            <person name="West A.P."/>
            <person name="Whitehead S.L."/>
            <person name="Willey D.L."/>
            <person name="Wilming L."/>
            <person name="Wray P.W."/>
            <person name="Wright M.W."/>
            <person name="Young L."/>
            <person name="Coulson A."/>
            <person name="Durbin R.M."/>
            <person name="Hubbard T."/>
            <person name="Sulston J.E."/>
            <person name="Beck S."/>
            <person name="Bentley D.R."/>
            <person name="Rogers J."/>
            <person name="Ross M.T."/>
        </authorList>
    </citation>
    <scope>NUCLEOTIDE SEQUENCE [LARGE SCALE GENOMIC DNA]</scope>
</reference>
<reference key="8">
    <citation type="journal article" date="2004" name="Genome Res.">
        <title>The status, quality, and expansion of the NIH full-length cDNA project: the Mammalian Gene Collection (MGC).</title>
        <authorList>
            <consortium name="The MGC Project Team"/>
        </authorList>
    </citation>
    <scope>NUCLEOTIDE SEQUENCE [LARGE SCALE MRNA] (ISOFORM 1)</scope>
    <scope>VARIANTS ARG-1053 AND ARG-1080</scope>
    <source>
        <tissue>Eye</tissue>
    </source>
</reference>
<reference key="9">
    <citation type="journal article" date="1994" name="Genomics">
        <title>The human gene for Xeroderma pigmentosum complementation group G (XPG) maps to 13q33 by fluorescence in situ hybridization.</title>
        <authorList>
            <person name="Samec S."/>
            <person name="Jones T.A."/>
            <person name="Corlet J."/>
            <person name="Scherly D."/>
            <person name="Sheer D."/>
            <person name="Wood R.D."/>
            <person name="Clarkson S.G."/>
        </authorList>
    </citation>
    <scope>NUCLEOTIDE SEQUENCE [GENOMIC DNA] OF 1-88</scope>
</reference>
<reference key="10">
    <citation type="journal article" date="1994" name="J. Biol. Chem.">
        <title>Isolation of active recombinant XPG protein, a human DNA repair endonuclease.</title>
        <authorList>
            <person name="O'Donovan A."/>
            <person name="Scherly D."/>
            <person name="Clarkson S.G."/>
            <person name="Wood R.D."/>
        </authorList>
    </citation>
    <scope>FUNCTION</scope>
    <scope>CATALYTIC ACTIVITY</scope>
    <scope>COFACTOR</scope>
    <scope>BIOPHYSICOCHEMICAL PROPERTIES</scope>
</reference>
<reference key="11">
    <citation type="journal article" date="1994" name="Nature">
        <title>XPG endonuclease makes the 3' incision in human DNA nucleotide excision repair.</title>
        <authorList>
            <person name="O'Donovan A."/>
            <person name="Davies A.A."/>
            <person name="Moggs J.G."/>
            <person name="West S.C."/>
            <person name="Wood R.D."/>
        </authorList>
    </citation>
    <scope>FUNCTION</scope>
    <scope>CATALYTIC ACTIVITY</scope>
</reference>
<reference key="12">
    <citation type="journal article" date="1994" name="Nucleic Acids Res.">
        <title>Human Xeroderma pigmentosum group G gene encodes a DNA endonuclease.</title>
        <authorList>
            <person name="Habraken Y."/>
            <person name="Sung P."/>
            <person name="Prakash L."/>
            <person name="Prakash S."/>
        </authorList>
    </citation>
    <scope>FUNCTION</scope>
    <scope>CATALYTIC ACTIVITY</scope>
</reference>
<reference key="13">
    <citation type="journal article" date="1995" name="Mutat. Res.">
        <title>XPG protein has a structure-specific endonuclease activity.</title>
        <authorList>
            <person name="Cloud K.G."/>
            <person name="Shen B."/>
            <person name="Strniste G.F."/>
            <person name="Park M.S."/>
        </authorList>
    </citation>
    <scope>FUNCTION</scope>
    <scope>CATALYTIC ACTIVITY</scope>
    <scope>SUBCELLULAR LOCATION</scope>
</reference>
<reference key="14">
    <citation type="journal article" date="1997" name="J. Biol. Chem.">
        <title>The DNA repair endonuclease XPG binds to proliferating cell nuclear antigen (PCNA) and shares sequence elements with the PCNA-binding regions of FEN-1 and cyclin-dependent kinase inhibitor p21.</title>
        <authorList>
            <person name="Gary R."/>
            <person name="Ludwig D.L."/>
            <person name="Cornelius H.L."/>
            <person name="MacInnes M.A."/>
            <person name="Park M.S."/>
        </authorList>
    </citation>
    <scope>INTERACTION WITH PCNA</scope>
</reference>
<reference key="15">
    <citation type="journal article" date="1999" name="Nucleic Acids Res.">
        <title>Nucleotide excision repair 3' endonuclease XPG stimulates the activity of base excision repair enzyme thymine glycol DNA glycosylase.</title>
        <authorList>
            <person name="Bessho T."/>
        </authorList>
    </citation>
    <scope>FUNCTION</scope>
    <scope>INTERACTION WITH NTHL1</scope>
</reference>
<reference key="16">
    <citation type="journal article" date="2003" name="Biochimie">
        <title>The XPG story.</title>
        <authorList>
            <person name="Clarkson S.G."/>
        </authorList>
    </citation>
    <scope>REVIEW</scope>
</reference>
<reference key="17">
    <citation type="journal article" date="1999" name="Hum. Mutat.">
        <title>A summary of mutations in the UV-sensitive disorders: xeroderma pigmentosum, Cockayne syndrome, and trichothiodystrophy.</title>
        <authorList>
            <person name="Cleaver J.E."/>
            <person name="Thompson L.H."/>
            <person name="Richardson A.S."/>
            <person name="States J.C."/>
        </authorList>
    </citation>
    <scope>REVIEW ON VARIANTS XP-G</scope>
</reference>
<reference key="18">
    <citation type="journal article" date="2005" name="Mol. Cell">
        <title>Recognition of RNA polymerase II and transcription bubbles by XPG, CSB, and TFIIH: insights for transcription-coupled repair and Cockayne Syndrome.</title>
        <authorList>
            <person name="Sarker A.H."/>
            <person name="Tsutakawa S.E."/>
            <person name="Kostek S."/>
            <person name="Ng C."/>
            <person name="Shin D.S."/>
            <person name="Peris M."/>
            <person name="Campeau E."/>
            <person name="Tainer J.A."/>
            <person name="Nogales E."/>
            <person name="Cooper P.K."/>
        </authorList>
    </citation>
    <scope>FUNCTION</scope>
    <scope>INTERACTION WITH ERCC6 AND RNA POLYMERASE II</scope>
    <scope>SUBCELLULAR LOCATION</scope>
    <scope>DOMAIN</scope>
</reference>
<reference key="19">
    <citation type="journal article" date="2009" name="Science">
        <title>Lysine acetylation targets protein complexes and co-regulates major cellular functions.</title>
        <authorList>
            <person name="Choudhary C."/>
            <person name="Kumar C."/>
            <person name="Gnad F."/>
            <person name="Nielsen M.L."/>
            <person name="Rehman M."/>
            <person name="Walther T.C."/>
            <person name="Olsen J.V."/>
            <person name="Mann M."/>
        </authorList>
    </citation>
    <scope>ACETYLATION [LARGE SCALE ANALYSIS] AT LYS-8</scope>
    <scope>IDENTIFICATION BY MASS SPECTROMETRY [LARGE SCALE ANALYSIS]</scope>
</reference>
<reference key="20">
    <citation type="journal article" date="2011" name="BMC Syst. Biol.">
        <title>Initial characterization of the human central proteome.</title>
        <authorList>
            <person name="Burkard T.R."/>
            <person name="Planyavsky M."/>
            <person name="Kaupe I."/>
            <person name="Breitwieser F.P."/>
            <person name="Buerckstuemmer T."/>
            <person name="Bennett K.L."/>
            <person name="Superti-Furga G."/>
            <person name="Colinge J."/>
        </authorList>
    </citation>
    <scope>IDENTIFICATION BY MASS SPECTROMETRY [LARGE SCALE ANALYSIS]</scope>
</reference>
<reference key="21">
    <citation type="journal article" date="2016" name="Mol. Cell">
        <title>Non-catalytic Roles for XPG with BRCA1 and BRCA2 in Homologous Recombination and Genome Stability.</title>
        <authorList>
            <person name="Trego K.S."/>
            <person name="Groesser T."/>
            <person name="Davalos A.R."/>
            <person name="Parplys A.C."/>
            <person name="Zhao W."/>
            <person name="Nelson M.R."/>
            <person name="Hlaing A."/>
            <person name="Shih B."/>
            <person name="Rydberg B."/>
            <person name="Pluth J.M."/>
            <person name="Tsai M.S."/>
            <person name="Hoeijmakers J.H.J."/>
            <person name="Sung P."/>
            <person name="Wiese C."/>
            <person name="Campisi J."/>
            <person name="Cooper P.K."/>
        </authorList>
    </citation>
    <scope>FUNCTION</scope>
    <scope>IDENTIFICATION IN THE HR COMPLEX</scope>
    <scope>INTERACTION WITH BRCA1; BRCA2 AND PALB2</scope>
    <scope>SUBCELLULAR LOCATION</scope>
    <scope>INDUCTION</scope>
</reference>
<reference key="22">
    <citation type="journal article" date="2019" name="Nat. Commun.">
        <title>Structural basis of TFIIH activation for nucleotide excision repair.</title>
        <authorList>
            <person name="Kokic G."/>
            <person name="Chernev A."/>
            <person name="Tegunov D."/>
            <person name="Dienemann C."/>
            <person name="Urlaub H."/>
            <person name="Cramer P."/>
        </authorList>
    </citation>
    <scope>STIMULATES XPD/ERCC2 HELICASE AND XPB/ERCC3 DNA TRANSLOCASE</scope>
</reference>
<reference evidence="37 38" key="23">
    <citation type="journal article" date="2016" name="J. Mol. Biol.">
        <title>Structural and Calorimetric Studies Demonstrate that Xeroderma Pigmentosum Type G (XPG) Can Be Imported to the Nucleus by a Classical Nuclear Import Pathway via a Monopartite NLS Sequence.</title>
        <authorList>
            <person name="Barros A.C."/>
            <person name="Takeda A.A."/>
            <person name="Dreyer T.R."/>
            <person name="Velazquez-Campoy A."/>
            <person name="Kobe B."/>
            <person name="Fontes M.R."/>
        </authorList>
    </citation>
    <scope>X-RAY CRYSTALLOGRAPHY (2.00 ANGSTROMS) OF 1054-1077 AND OF 1168-1186 IN COMPLEX WITH MOUSE KPNA2</scope>
    <scope>NUCLEAR LOCALIZATION SIGNAL</scope>
</reference>
<reference evidence="39 40 41 42" key="24">
    <citation type="journal article" date="2020" name="Nucleic Acids Res.">
        <title>The crystal structure of human XPG, the xeroderma pigmentosum group G endonuclease, provides insight into nucleotide excision DNA repair.</title>
        <authorList>
            <person name="Gonzalez-Corrochano R."/>
            <person name="Ruiz F.M."/>
            <person name="Taylor N.M.I."/>
            <person name="Huecas S."/>
            <person name="Drakulic S."/>
            <person name="Spinola-Amilibia M."/>
            <person name="Fernandez-Tornero C."/>
        </authorList>
    </citation>
    <scope>X-RAY CRYSTALLOGRAPHY (2.50 ANGSTROMS) OF 1-747 AND 750-990; OF MUTANT ALA-812; OF APO FORM AND IN COMPLEX WITH DNA</scope>
    <scope>FUNCTION</scope>
    <scope>CATALYTIC ACTIVITY</scope>
    <scope>DOMAIN</scope>
    <scope>DNA BINDING</scope>
</reference>
<reference evidence="43" key="25">
    <citation type="journal article" date="2020" name="Proc. Natl. Acad. Sci. U.S.A.">
        <title>Human XPG nuclease structure, assembly, and activities with insights for neurodegeneration and cancer from pathogenic mutations.</title>
        <authorList>
            <person name="Tsutakawa S.E."/>
            <person name="Sarker A.H."/>
            <person name="Ng C."/>
            <person name="Arvai A.S."/>
            <person name="Shin D.S."/>
            <person name="Shih B."/>
            <person name="Jiang S."/>
            <person name="Thwin A.C."/>
            <person name="Tsai M.S."/>
            <person name="Willcox A."/>
            <person name="Her M.Z."/>
            <person name="Trego K.S."/>
            <person name="Raetz A.G."/>
            <person name="Rosenberg D."/>
            <person name="Bacolla A."/>
            <person name="Hammel M."/>
            <person name="Griffith J.D."/>
            <person name="Cooper P.K."/>
            <person name="Tainer J.A."/>
        </authorList>
    </citation>
    <scope>X-RAY CRYSTALLOGRAPHY (2.00 ANGSTROMS) OF 766-987</scope>
    <scope>FUNCTION</scope>
    <scope>CATALYTIC ACTIVITY</scope>
    <scope>SUBUNIT</scope>
    <scope>DOMAIN</scope>
    <scope>MUTAGENESIS OF 67-PHE--PHE-68; 955-LEU-ASP-956; PHE-978 AND LEU-981</scope>
</reference>
<reference key="26">
    <citation type="journal article" date="2014" name="Am. J. Med. Genet. A">
        <title>A novel homozygous ERCC5 truncating mutation in a family with prenatal arthrogryposis--further evidence of genotype-phenotype correlation.</title>
        <authorList>
            <person name="Drury S."/>
            <person name="Boustred C."/>
            <person name="Tekman M."/>
            <person name="Stanescu H."/>
            <person name="Kleta R."/>
            <person name="Lench N."/>
            <person name="Chitty L.S."/>
            <person name="Scott R.H."/>
        </authorList>
    </citation>
    <scope>INVOLVEMENT IN COFS3</scope>
</reference>
<reference key="27">
    <citation type="journal article" date="1994" name="Hum. Mol. Genet.">
        <title>Mutations that disable the DNA repair gene XPG in a Xeroderma pigmentosum group G patient.</title>
        <authorList>
            <person name="Nouspikel T."/>
            <person name="Clarkson S.G."/>
        </authorList>
    </citation>
    <scope>VARIANT XP-G VAL-792</scope>
</reference>
<reference key="28">
    <citation type="journal article" date="1997" name="Proc. Natl. Acad. Sci. U.S.A.">
        <title>A common mutational pattern in Cockayne syndrome patients from Xeroderma pigmentosum group G: implications for a second XPG function.</title>
        <authorList>
            <person name="Nouspikel T."/>
            <person name="Lalle P."/>
            <person name="Leadon S.A."/>
            <person name="Cooper P.K."/>
            <person name="Clarkson S.G."/>
        </authorList>
    </citation>
    <scope>RETRACTED PAPER</scope>
</reference>
<reference key="29">
    <citation type="journal article" date="2006" name="Proc. Natl. Acad. Sci. U.S.A.">
        <authorList>
            <person name="Nouspikel T."/>
            <person name="Lalle P."/>
            <person name="Leadon S.A."/>
            <person name="Cooper P.K."/>
            <person name="Clarkson S.G."/>
        </authorList>
    </citation>
    <scope>RETRACTION NOTICE OF PUBMED:9096355</scope>
</reference>
<reference key="30">
    <citation type="journal article" date="2001" name="Pediatr. Res.">
        <title>Xeroderma pigmentosum group G with severe neurological involvement and features of Cockayne syndrome in infancy.</title>
        <authorList>
            <person name="Zafeiriou D.I."/>
            <person name="Thorel F."/>
            <person name="Andreou A."/>
            <person name="Kleijer W.J."/>
            <person name="Raams A."/>
            <person name="Garritsen V.H."/>
            <person name="Gombakis N."/>
            <person name="Jaspers N.G.J."/>
            <person name="Clarkson S.G."/>
        </authorList>
    </citation>
    <scope>VARIANT XP-G HIS-72</scope>
</reference>
<reference key="31">
    <citation type="journal article" date="2002" name="J. Invest. Dermatol.">
        <title>The founding members of xeroderma pigmentosum group G produce XPG protein with severely impaired endonuclease activity.</title>
        <authorList>
            <person name="Lalle P."/>
            <person name="Nouspikel T."/>
            <person name="Constantinou A."/>
            <person name="Thorel F."/>
            <person name="Clarkson S.G."/>
        </authorList>
    </citation>
    <scope>VARIANT XP-G PRO-858</scope>
</reference>
<reference key="32">
    <citation type="journal article" date="2002" name="J. Invest. Dermatol.">
        <title>Relationship of neurologic degeneration to genotype in three xeroderma pigmentosum group G patients.</title>
        <authorList>
            <person name="Emmert S."/>
            <person name="Slor H."/>
            <person name="Busch D.B."/>
            <person name="Batko S."/>
            <person name="Albert R.B."/>
            <person name="Coleman D."/>
            <person name="Khan S.G."/>
            <person name="Abu-Libdeh B."/>
            <person name="DiGiovanna J.J."/>
            <person name="Cunningham B.B."/>
            <person name="Lee M.M."/>
            <person name="Crollick J."/>
            <person name="Inui H."/>
            <person name="Ueda T."/>
            <person name="Hedayati M."/>
            <person name="Grossman L."/>
            <person name="Shahlavi T."/>
            <person name="Cleaver J.E."/>
            <person name="Kraemer K.H."/>
        </authorList>
    </citation>
    <scope>VARIANT XP-G THR-874</scope>
</reference>
<reference key="33">
    <citation type="journal article" date="2013" name="Hum. Mutat.">
        <title>Novel XPG (ERCC5) mutations affect DNA repair and cell survival after ultraviolet but not oxidative stress.</title>
        <authorList>
            <person name="Soltys D.T."/>
            <person name="Rocha C.R."/>
            <person name="Lerner L.K."/>
            <person name="de Souza T.A."/>
            <person name="Munford V."/>
            <person name="Cabral F."/>
            <person name="Nardo T."/>
            <person name="Stefanini M."/>
            <person name="Sarasin A."/>
            <person name="Cabral-Neto J.B."/>
            <person name="Menck C.F."/>
        </authorList>
    </citation>
    <scope>VARIANTS XP-G ASP-28 AND CYS-968</scope>
    <scope>CHARACTERIZATION OF VARIANTS XP-G ASP-28 AND CYS-968</scope>
</reference>
<reference key="34">
    <citation type="journal article" date="2018" name="Neurol. Genet.">
        <title>TPP2 mutation associated with sterile brain inflammation mimicking MS.</title>
        <authorList>
            <person name="Reinthaler E.M."/>
            <person name="Graf E."/>
            <person name="Zrzavy T."/>
            <person name="Wieland T."/>
            <person name="Hotzy C."/>
            <person name="Kopecky C."/>
            <person name="Pferschy S."/>
            <person name="Schmied C."/>
            <person name="Leutmezer F."/>
            <person name="Keilani M."/>
            <person name="Lill C.M."/>
            <person name="Hoffjan S."/>
            <person name="Epplen J.T."/>
            <person name="Zettl U.K."/>
            <person name="Hecker M."/>
            <person name="Deutschlaender A."/>
            <person name="Meuth S.G."/>
            <person name="Ahram M."/>
            <person name="Mustafa B."/>
            <person name="El-Khateeb M."/>
            <person name="Vilarino-Gueell C."/>
            <person name="Sadovnick A.D."/>
            <person name="Zimprich F."/>
            <person name="Tomkinson B."/>
            <person name="Strom T."/>
            <person name="Kristoferitsch W."/>
            <person name="Lassmann H."/>
            <person name="Zimprich A."/>
        </authorList>
    </citation>
    <scope>VARIANT ALA-1078</scope>
</reference>
<feature type="chain" id="PRO_0000154031" description="DNA excision repair protein ERCC-5">
    <location>
        <begin position="1"/>
        <end position="1186"/>
    </location>
</feature>
<feature type="region of interest" description="N-domain" evidence="35">
    <location>
        <begin position="1"/>
        <end position="78"/>
    </location>
</feature>
<feature type="region of interest" description="DNA-binding; may bind to the undamaged single-strand DNA of the DNA repair bubble" evidence="18 36 42">
    <location>
        <begin position="31"/>
        <end position="67"/>
    </location>
</feature>
<feature type="region of interest" description="Spacer region" evidence="10">
    <location>
        <begin position="79"/>
        <end position="785"/>
    </location>
</feature>
<feature type="region of interest" description="Disordered" evidence="4">
    <location>
        <begin position="306"/>
        <end position="342"/>
    </location>
</feature>
<feature type="region of interest" description="Disordered" evidence="4">
    <location>
        <begin position="354"/>
        <end position="385"/>
    </location>
</feature>
<feature type="region of interest" description="Disordered" evidence="4">
    <location>
        <begin position="404"/>
        <end position="473"/>
    </location>
</feature>
<feature type="region of interest" description="Disordered" evidence="4">
    <location>
        <begin position="510"/>
        <end position="533"/>
    </location>
</feature>
<feature type="region of interest" description="Disordered" evidence="4">
    <location>
        <begin position="667"/>
        <end position="724"/>
    </location>
</feature>
<feature type="region of interest" description="I-domain" evidence="35">
    <location>
        <begin position="786"/>
        <end position="881"/>
    </location>
</feature>
<feature type="region of interest" description="DNA-binding; may bind to the undamaged single-strand DNA of the DNA repair bubble" evidence="18 36 42">
    <location>
        <begin position="820"/>
        <end position="836"/>
    </location>
</feature>
<feature type="region of interest" description="DNA-binding; H2TH (helix-2turn-helix) motif which binds double-stranded DNA" evidence="18 36 42">
    <location>
        <begin position="848"/>
        <end position="880"/>
    </location>
</feature>
<feature type="region of interest" description="DNA-binding; may bind double-stranded DNA" evidence="18 36 42">
    <location>
        <begin position="912"/>
        <end position="918"/>
    </location>
</feature>
<feature type="region of interest" description="Interaction with PCNA" evidence="28">
    <location>
        <begin position="981"/>
        <end position="1009"/>
    </location>
</feature>
<feature type="region of interest" description="Interaction with ERCC6/CSB" evidence="10">
    <location>
        <begin position="1011"/>
        <end position="1186"/>
    </location>
</feature>
<feature type="region of interest" description="Disordered" evidence="4">
    <location>
        <begin position="1056"/>
        <end position="1081"/>
    </location>
</feature>
<feature type="region of interest" description="Disordered" evidence="4">
    <location>
        <begin position="1095"/>
        <end position="1186"/>
    </location>
</feature>
<feature type="short sequence motif" description="Nuclear localization signal 1" evidence="34">
    <location>
        <begin position="1057"/>
        <end position="1074"/>
    </location>
</feature>
<feature type="short sequence motif" description="Nuclear localization signal 2" evidence="34">
    <location>
        <begin position="1169"/>
        <end position="1186"/>
    </location>
</feature>
<feature type="compositionally biased region" description="Basic and acidic residues" evidence="4">
    <location>
        <begin position="325"/>
        <end position="336"/>
    </location>
</feature>
<feature type="compositionally biased region" description="Basic and acidic residues" evidence="4">
    <location>
        <begin position="454"/>
        <end position="472"/>
    </location>
</feature>
<feature type="compositionally biased region" description="Polar residues" evidence="4">
    <location>
        <begin position="1124"/>
        <end position="1133"/>
    </location>
</feature>
<feature type="compositionally biased region" description="Basic residues" evidence="4">
    <location>
        <begin position="1169"/>
        <end position="1186"/>
    </location>
</feature>
<feature type="binding site" evidence="3">
    <location>
        <position position="30"/>
    </location>
    <ligand>
        <name>Mg(2+)</name>
        <dbReference type="ChEBI" id="CHEBI:18420"/>
        <label>1</label>
    </ligand>
</feature>
<feature type="binding site" evidence="3">
    <location>
        <position position="77"/>
    </location>
    <ligand>
        <name>Mg(2+)</name>
        <dbReference type="ChEBI" id="CHEBI:18420"/>
        <label>1</label>
    </ligand>
</feature>
<feature type="binding site" evidence="3">
    <location>
        <position position="789"/>
    </location>
    <ligand>
        <name>Mg(2+)</name>
        <dbReference type="ChEBI" id="CHEBI:18420"/>
        <label>1</label>
    </ligand>
</feature>
<feature type="binding site" evidence="3">
    <location>
        <position position="791"/>
    </location>
    <ligand>
        <name>Mg(2+)</name>
        <dbReference type="ChEBI" id="CHEBI:18420"/>
        <label>1</label>
    </ligand>
</feature>
<feature type="binding site" evidence="3">
    <location>
        <position position="810"/>
    </location>
    <ligand>
        <name>Mg(2+)</name>
        <dbReference type="ChEBI" id="CHEBI:18420"/>
        <label>2</label>
    </ligand>
</feature>
<feature type="binding site" evidence="3">
    <location>
        <position position="812"/>
    </location>
    <ligand>
        <name>Mg(2+)</name>
        <dbReference type="ChEBI" id="CHEBI:18420"/>
        <label>2</label>
    </ligand>
</feature>
<feature type="binding site" evidence="3">
    <location>
        <position position="861"/>
    </location>
    <ligand>
        <name>Mg(2+)</name>
        <dbReference type="ChEBI" id="CHEBI:18420"/>
        <label>2</label>
    </ligand>
</feature>
<feature type="modified residue" description="N6-acetyllysine" evidence="44">
    <location>
        <position position="8"/>
    </location>
</feature>
<feature type="modified residue" description="Phosphoserine" evidence="2">
    <location>
        <position position="384"/>
    </location>
</feature>
<feature type="modified residue" description="Phosphoserine" evidence="2">
    <location>
        <position position="705"/>
    </location>
</feature>
<feature type="splice variant" id="VSP_035380" description="In isoform 2." evidence="32">
    <location>
        <begin position="1"/>
        <end position="767"/>
    </location>
</feature>
<feature type="splice variant" id="VSP_053828" description="In isoform 3." evidence="32">
    <original>ESDDFSQY</original>
    <variation>VYLPLLQP</variation>
    <location>
        <begin position="225"/>
        <end position="232"/>
    </location>
</feature>
<feature type="splice variant" id="VSP_053829" description="In isoform 3." evidence="32">
    <location>
        <begin position="233"/>
        <end position="1186"/>
    </location>
</feature>
<feature type="sequence variant" id="VAR_075773" description="In XP-G; patient cells show a strong DNA repair defect in response to UV light but not in response to oxidative stress; decreased nucleotide-excision repair activity; dbSNP:rs267607281." evidence="11">
    <original>A</original>
    <variation>D</variation>
    <location>
        <position position="28"/>
    </location>
</feature>
<feature type="sequence variant" id="VAR_015280" description="In XP-G; combined with features of Cockayne syndrome; dbSNP:rs121434574." evidence="6">
    <original>P</original>
    <variation>H</variation>
    <location>
        <position position="72"/>
    </location>
</feature>
<feature type="sequence variant" id="VAR_020431" description="In dbSNP:rs4987063.">
    <original>V</original>
    <variation>I</variation>
    <location>
        <position position="145"/>
    </location>
</feature>
<feature type="sequence variant" id="VAR_023120" description="In dbSNP:rs4150295." evidence="31">
    <original>H</original>
    <variation>R</variation>
    <location>
        <position position="181"/>
    </location>
</feature>
<feature type="sequence variant" id="VAR_007732" description="In dbSNP:rs1047769." evidence="19 25 30 31">
    <original>M</original>
    <variation>V</variation>
    <location>
        <position position="254"/>
    </location>
</feature>
<feature type="sequence variant" id="VAR_020432" description="In dbSNP:rs4150313." evidence="31">
    <original>Q</original>
    <variation>R</variation>
    <location>
        <position position="256"/>
    </location>
</feature>
<feature type="sequence variant" id="VAR_014829" description="In dbSNP:rs2307491." evidence="31">
    <original>S</original>
    <variation>C</variation>
    <location>
        <position position="311"/>
    </location>
</feature>
<feature type="sequence variant" id="VAR_023121" description="In dbSNP:rs4150315." evidence="31">
    <original>E</original>
    <variation>K</variation>
    <location>
        <position position="399"/>
    </location>
</feature>
<feature type="sequence variant" id="VAR_020433" description="In dbSNP:rs2227869." evidence="31">
    <original>C</original>
    <variation>S</variation>
    <location>
        <position position="529"/>
    </location>
</feature>
<feature type="sequence variant" id="VAR_023122" description="In dbSNP:rs4150318." evidence="31">
    <original>V</original>
    <variation>I</variation>
    <location>
        <position position="590"/>
    </location>
</feature>
<feature type="sequence variant" id="VAR_023123" description="In dbSNP:rs4150319." evidence="31">
    <original>V</original>
    <variation>L</variation>
    <location>
        <position position="597"/>
    </location>
</feature>
<feature type="sequence variant" id="VAR_046373" description="In dbSNP:rs1803542.">
    <original>F</original>
    <variation>L</variation>
    <location>
        <position position="670"/>
    </location>
</feature>
<feature type="sequence variant" id="VAR_020434" description="In dbSNP:rs4987168.">
    <original>Q</original>
    <variation>R</variation>
    <location>
        <position position="680"/>
    </location>
</feature>
<feature type="sequence variant" id="VAR_007733" description="In XP-G; mild form; dbSNP:rs121434571." evidence="21">
    <original>A</original>
    <variation>V</variation>
    <location>
        <position position="792"/>
    </location>
</feature>
<feature type="sequence variant" id="VAR_017097" description="In XP-G; reduced stability and greatly impaired endonuclease activity; dbSNP:rs121434575." evidence="7">
    <original>L</original>
    <variation>P</variation>
    <location>
        <position position="858"/>
    </location>
</feature>
<feature type="sequence variant" id="VAR_017096" description="In XP-G; mild form; residual activity; dbSNP:rs121434576." evidence="8">
    <original>A</original>
    <variation>T</variation>
    <location>
        <position position="874"/>
    </location>
</feature>
<feature type="sequence variant" id="VAR_020435" description="In dbSNP:rs4150342." evidence="31">
    <original>N</original>
    <variation>S</variation>
    <location>
        <position position="879"/>
    </location>
</feature>
<feature type="sequence variant" id="VAR_075774" description="In XP-G; patient cells show a strong DNA repair defect in response to UV light but not in response to oxidative stress; decreased nucleotide-excision repair activity; dbSNP:rs267607280." evidence="11">
    <original>W</original>
    <variation>C</variation>
    <location>
        <position position="968"/>
    </location>
</feature>
<feature type="sequence variant" id="VAR_023124" description="In dbSNP:rs4150387." evidence="31">
    <original>R</original>
    <variation>H</variation>
    <location>
        <position position="1009"/>
    </location>
</feature>
<feature type="sequence variant" id="VAR_046374" description="In dbSNP:rs9514066." evidence="9 19 25 26 30 31">
    <original>G</original>
    <variation>R</variation>
    <location>
        <position position="1053"/>
    </location>
</feature>
<feature type="sequence variant" id="VAR_085644" description="Found in a patient diagnosed with multiple sclerosis; uncertain significance; dbSNP:rs760347832." evidence="15">
    <original>S</original>
    <variation>A</variation>
    <location>
        <position position="1078"/>
    </location>
</feature>
<feature type="sequence variant" id="VAR_023125" description="Requires 2 nucleotide substitutions; dbSNP:rs587778291." evidence="31">
    <original>G</original>
    <variation>Q</variation>
    <location>
        <position position="1080"/>
    </location>
</feature>
<feature type="sequence variant" id="VAR_046375" description="In dbSNP:rs9514067." evidence="9 19 25 26 30 31">
    <original>G</original>
    <variation>R</variation>
    <location>
        <position position="1080"/>
    </location>
</feature>
<feature type="sequence variant" id="VAR_007734" description="In dbSNP:rs17655." evidence="26">
    <original>D</original>
    <variation>H</variation>
    <location>
        <position position="1104"/>
    </location>
</feature>
<feature type="sequence variant" id="VAR_020436" description="In dbSNP:rs2227871.">
    <original>A</original>
    <variation>V</variation>
    <location>
        <position position="1119"/>
    </location>
</feature>
<feature type="mutagenesis site" description="Slight reduction in endonuclease activity. Increased affinity for bubble DNA." evidence="17">
    <original>FF</original>
    <variation>AA</variation>
    <location>
        <begin position="67"/>
        <end position="68"/>
    </location>
</feature>
<feature type="mutagenesis site" description="Reduced protein stability, two-fold decrease in 15-nt bubble DNA incision activity and smaller decrease in Y DNA incision activity; when associated with A-978 and A-981." evidence="17">
    <original>LD</original>
    <variation>AA</variation>
    <location>
        <begin position="955"/>
        <end position="956"/>
    </location>
</feature>
<feature type="mutagenesis site" description="Reduced protein stability, two-fold decrease in 15-nt bubble DNA incision activity and smaller decrease in Y DNA incision activity; when associated with 955-A-A-956 and A-981." evidence="17">
    <original>F</original>
    <variation>A</variation>
    <location>
        <position position="978"/>
    </location>
</feature>
<feature type="mutagenesis site" description="Reduced protein stability, two-fold decrease in 15-nt bubble DNA incision activity and smaller decrease in Y DNA incision activity; when associated with 955-A-A-956 and A-978." evidence="17">
    <original>L</original>
    <variation>A</variation>
    <location>
        <position position="981"/>
    </location>
</feature>
<feature type="sequence conflict" description="In Ref. 2; BAA03812." evidence="32" ref="2">
    <original>L</original>
    <variation>P</variation>
    <location>
        <position position="55"/>
    </location>
</feature>
<feature type="sequence conflict" description="In Ref. 2; BAA03812." evidence="32" ref="2">
    <original>KTA</original>
    <variation>QTS</variation>
    <location>
        <begin position="120"/>
        <end position="122"/>
    </location>
</feature>
<feature type="sequence conflict" description="In Ref. 2; BAA03812." evidence="32" ref="2">
    <original>K</original>
    <variation>Q</variation>
    <location>
        <position position="126"/>
    </location>
</feature>
<feature type="sequence conflict" description="In Ref. 2; BAA03812." evidence="32" ref="2">
    <original>RQY</original>
    <variation>SSH</variation>
    <location>
        <begin position="264"/>
        <end position="266"/>
    </location>
</feature>
<feature type="sequence conflict" description="In Ref. 2; BAA03812." evidence="32" ref="2">
    <original>I</original>
    <variation>F</variation>
    <location>
        <position position="760"/>
    </location>
</feature>
<feature type="sequence conflict" description="In Ref. 2; BAA03812." evidence="32" ref="2">
    <original>I</original>
    <variation>V</variation>
    <location>
        <position position="796"/>
    </location>
</feature>
<feature type="sequence conflict" description="In Ref. 2; BAA03812." evidence="32" ref="2">
    <original>EGIPTVGCV</original>
    <variation>GNTNCGLC</variation>
    <location>
        <begin position="864"/>
        <end position="872"/>
    </location>
</feature>
<feature type="sequence conflict" description="In Ref. 2; BAA03812." evidence="32" ref="2">
    <original>R</original>
    <variation>S</variation>
    <location>
        <position position="959"/>
    </location>
</feature>
<feature type="strand" evidence="46">
    <location>
        <begin position="3"/>
        <end position="5"/>
    </location>
</feature>
<feature type="helix" evidence="45">
    <location>
        <begin position="6"/>
        <end position="10"/>
    </location>
</feature>
<feature type="helix" evidence="45">
    <location>
        <begin position="11"/>
        <end position="13"/>
    </location>
</feature>
<feature type="strand" evidence="45">
    <location>
        <begin position="15"/>
        <end position="17"/>
    </location>
</feature>
<feature type="helix" evidence="45">
    <location>
        <begin position="19"/>
        <end position="22"/>
    </location>
</feature>
<feature type="strand" evidence="45">
    <location>
        <begin position="26"/>
        <end position="30"/>
    </location>
</feature>
<feature type="helix" evidence="45">
    <location>
        <begin position="31"/>
        <end position="40"/>
    </location>
</feature>
<feature type="strand" evidence="46">
    <location>
        <begin position="45"/>
        <end position="48"/>
    </location>
</feature>
<feature type="helix" evidence="45">
    <location>
        <begin position="53"/>
        <end position="67"/>
    </location>
</feature>
<feature type="strand" evidence="45">
    <location>
        <begin position="71"/>
        <end position="76"/>
    </location>
</feature>
<feature type="strand" evidence="45">
    <location>
        <begin position="713"/>
        <end position="715"/>
    </location>
</feature>
<feature type="helix" evidence="46">
    <location>
        <begin position="716"/>
        <end position="724"/>
    </location>
</feature>
<feature type="turn" evidence="46">
    <location>
        <begin position="755"/>
        <end position="757"/>
    </location>
</feature>
<feature type="helix" evidence="47">
    <location>
        <begin position="766"/>
        <end position="779"/>
    </location>
</feature>
<feature type="strand" evidence="47">
    <location>
        <begin position="783"/>
        <end position="785"/>
    </location>
</feature>
<feature type="helix" evidence="47">
    <location>
        <begin position="790"/>
        <end position="799"/>
    </location>
</feature>
<feature type="strand" evidence="47">
    <location>
        <begin position="802"/>
        <end position="804"/>
    </location>
</feature>
<feature type="helix" evidence="47">
    <location>
        <begin position="812"/>
        <end position="815"/>
    </location>
</feature>
<feature type="strand" evidence="47">
    <location>
        <begin position="820"/>
        <end position="823"/>
    </location>
</feature>
<feature type="strand" evidence="47">
    <location>
        <begin position="830"/>
        <end position="836"/>
    </location>
</feature>
<feature type="helix" evidence="47">
    <location>
        <begin position="837"/>
        <end position="844"/>
    </location>
</feature>
<feature type="helix" evidence="47">
    <location>
        <begin position="848"/>
        <end position="858"/>
    </location>
</feature>
<feature type="helix" evidence="47">
    <location>
        <begin position="871"/>
        <end position="880"/>
    </location>
</feature>
<feature type="helix" evidence="47">
    <location>
        <begin position="887"/>
        <end position="901"/>
    </location>
</feature>
<feature type="helix" evidence="47">
    <location>
        <begin position="913"/>
        <end position="919"/>
    </location>
</feature>
<feature type="helix" evidence="47">
    <location>
        <begin position="930"/>
        <end position="937"/>
    </location>
</feature>
<feature type="helix" evidence="47">
    <location>
        <begin position="955"/>
        <end position="966"/>
    </location>
</feature>
<feature type="helix" evidence="47">
    <location>
        <begin position="970"/>
        <end position="985"/>
    </location>
</feature>
<protein>
    <recommendedName>
        <fullName evidence="32">DNA excision repair protein ERCC-5</fullName>
        <ecNumber evidence="17 18 20 22 23 24">3.1.-.-</ecNumber>
    </recommendedName>
    <alternativeName>
        <fullName>DNA repair protein complementing XP-G cells</fullName>
        <shortName>XPG</shortName>
    </alternativeName>
    <alternativeName>
        <fullName>Xeroderma pigmentosum group G-complementing protein</fullName>
    </alternativeName>
</protein>
<proteinExistence type="evidence at protein level"/>
<keyword id="KW-0002">3D-structure</keyword>
<keyword id="KW-0007">Acetylation</keyword>
<keyword id="KW-0025">Alternative splicing</keyword>
<keyword id="KW-0158">Chromosome</keyword>
<keyword id="KW-0172">Cockayne syndrome</keyword>
<keyword id="KW-0209">Deafness</keyword>
<keyword id="KW-0225">Disease variant</keyword>
<keyword id="KW-0227">DNA damage</keyword>
<keyword id="KW-0234">DNA repair</keyword>
<keyword id="KW-0238">DNA-binding</keyword>
<keyword id="KW-0242">Dwarfism</keyword>
<keyword id="KW-0255">Endonuclease</keyword>
<keyword id="KW-0378">Hydrolase</keyword>
<keyword id="KW-0460">Magnesium</keyword>
<keyword id="KW-0479">Metal-binding</keyword>
<keyword id="KW-0540">Nuclease</keyword>
<keyword id="KW-0539">Nucleus</keyword>
<keyword id="KW-0597">Phosphoprotein</keyword>
<keyword id="KW-1267">Proteomics identification</keyword>
<keyword id="KW-1185">Reference proteome</keyword>
<keyword id="KW-0857">Xeroderma pigmentosum</keyword>
<comment type="function">
    <text evidence="10 14 16 17 18 20 22 23 24 29">Single-stranded structure-specific DNA endonuclease involved in DNA excision repair (PubMed:32522879, PubMed:32821917, PubMed:7651464, PubMed:8078765, PubMed:8090225, PubMed:8206890). Makes the 3'incision in DNA nucleotide excision repair (NER) (PubMed:32522879, PubMed:32821917, PubMed:8078765, PubMed:8090225). Binds and bends DNA repair bubble substrate and breaks base stacking at the single-strand/double-strand DNA junction of the DNA bubble (PubMed:32522879). Plays a role in base excision repair (BER) by promoting the binding of DNA glycosylase NTHL1 to its substrate and increasing NTHL1 catalytic activity that removes oxidized pyrimidines from DNA (PubMed:9927729). Involved in transcription-coupled nucleotide excision repair (TCR) which allows RNA polymerase II-blocking lesions to be rapidly removed from the transcribed strand of active genes (PubMed:16246722). Functions during the initial step of TCR in cooperation with ERCC6/CSB to recognized stalled RNA polymerase II (PubMed:16246722). Also, stimulates ERCC6/CSB binding to the DNA repair bubble and ERCC6/CSB ATPase activity (PubMed:16246722). Required for DNA replication fork maintenance and preservation of genomic stability (PubMed:26833090, PubMed:32522879). Involved in homologous recombination repair (HRR) induced by DNA replication stress by recruiting RAD51, BRCA2, and PALB2 to the damaged DNA site (PubMed:26833090). In TFIIH stimulates the 5'-3' helicase activity of XPD/ERCC2 and the DNA translocase activity of XPB/ERCC3 (PubMed:31253769). During HRR, binds to the replication fork with high specificity and stabilizes it (PubMed:32522879). Also, acts upstream of HRR, to promote the release of BRCA1 from DNA (PubMed:26833090).</text>
</comment>
<comment type="cofactor">
    <cofactor evidence="24">
        <name>Mg(2+)</name>
        <dbReference type="ChEBI" id="CHEBI:18420"/>
    </cofactor>
    <text evidence="1">Binds 2 magnesium ions per subunit. They probably participate in the reaction catalyzed by the enzyme. May bind an additional third magnesium ion after substrate binding.</text>
</comment>
<comment type="biophysicochemical properties">
    <phDependence>
        <text evidence="24">Optimum pH is 6.5-7.</text>
    </phDependence>
</comment>
<comment type="subunit">
    <text evidence="10 14 17 28 29">Monomer (PubMed:32522879). Homodimer (PubMed:32522879). Component of the homologous recombination repair (HR) complex composed of ERCC5/XPG, BRCA2, PALB2, DSS1 and RAD51 (PubMed:26833090). Within the complex, interacts with BRCA2 and PALB2 (PubMed:26833090). Interacts with RNA polymerase II (PubMed:16246722). Interacts (via C-terminus) with ERCC6/CSB; the interaction stimulates ERCC6/CSB binding to the DNA repair bubble and ERCC6/CSB ATPase activity (PubMed:16246722). May form a complex composed of RNA polymerase II, ERCC6/CSB and ERCC5/XPG which associates with the DNA repair bubble during transcription-coupled nucleotide excision repair (PubMed:16246722). Interacts with BRCA1; the interaction promotes the release of BRCA1 from DNA (PubMed:26833090). Interacts with PCNA (PubMed:9305916). Interacts with NTHL1; the interaction stimulates NTHL1 activity and NTHL1 binding to its DNA substrate (PubMed:9927729).</text>
</comment>
<comment type="interaction">
    <interactant intactId="EBI-765885">
        <id>P28715</id>
    </interactant>
    <interactant intactId="EBI-448167">
        <id>P24522</id>
        <label>GADD45A</label>
    </interactant>
    <organismsDiffer>false</organismsDiffer>
    <experiments>2</experiments>
</comment>
<comment type="subcellular location">
    <subcellularLocation>
        <location evidence="10 14 20">Nucleus</location>
    </subcellularLocation>
    <subcellularLocation>
        <location evidence="14">Chromosome</location>
    </subcellularLocation>
    <text evidence="14">Colocalizes with RAD51 to nuclear foci in S phase (PubMed:26833090). Localizes to DNA double-strand breaks (DBS) during replication stress (PubMed:26833090). Colocalizes with BRCA2 to nuclear foci following DNA replication stress (PubMed:26833090).</text>
</comment>
<comment type="alternative products">
    <event type="alternative splicing"/>
    <isoform>
        <id>P28715-1</id>
        <name>1</name>
        <sequence type="displayed"/>
    </isoform>
    <isoform>
        <id>P28715-2</id>
        <name>2</name>
        <sequence type="described" ref="VSP_035380"/>
    </isoform>
    <isoform>
        <id>P28715-3</id>
        <name>3</name>
        <sequence type="described" ref="VSP_053828 VSP_053829"/>
    </isoform>
</comment>
<comment type="induction">
    <text evidence="14">Induced by replication stress caused by DNA double-strand breaks (DBS).</text>
</comment>
<comment type="domain">
    <text evidence="13">Both nuclear localization signals 1 and 2 act as a monopartite signal which binds to the high affinity site on KPNA2/importin-alpha.</text>
</comment>
<comment type="domain">
    <text evidence="10 17 18">Both the spacer region (also known as the recognition (R) domain) and C-terminal domain are required for stable binding to the DNA repair bubble (PubMed:16246722). However, both domains are dispensable for incision of DNA bubble structures (PubMed:16246722, PubMed:32522879, PubMed:32821917).</text>
</comment>
<comment type="disease" evidence="5 6 7 8 11 21">
    <disease id="DI-01161">
        <name>Xeroderma pigmentosum complementation group G</name>
        <acronym>XP-G</acronym>
        <description>An autosomal recessive pigmentary skin disorder characterized by solar hypersensitivity of the skin, high predisposition for developing cancers on areas exposed to sunlight and, in some cases, neurological abnormalities. The skin develops marked freckling and other pigmentation abnormalities. Some XP-G patients present features of Cockayne syndrome, cachectic dwarfism, pigmentary retinopathy, ataxia, decreased nerve conduction velocities. The phenotype combining xeroderma pigmentosum and Cockayne syndrome traits is referred to as XP-CS complex.</description>
        <dbReference type="MIM" id="278780"/>
    </disease>
    <text>The disease is caused by variants affecting the gene represented in this entry.</text>
</comment>
<comment type="disease" evidence="12">
    <disease id="DI-04514">
        <name>Cerebro-oculo-facio-skeletal syndrome 3</name>
        <acronym>COFS3</acronym>
        <description>A disorder of prenatal onset characterized by microcephaly, congenital cataracts, facial dysmorphism, neurogenic arthrogryposis, growth failure and severe psychomotor retardation. COFS is considered to be part of the nucleotide-excision repair disorders spectrum that include also xeroderma pigmentosum, trichothiodystrophy and Cockayne syndrome.</description>
        <dbReference type="MIM" id="616570"/>
    </disease>
    <text>The disease is caused by variants affecting the gene represented in this entry.</text>
</comment>
<comment type="miscellaneous">
    <molecule>Isoform 3</molecule>
    <text evidence="32">Includes a cryptic exon found in intron 6.</text>
</comment>
<comment type="similarity">
    <text evidence="32">Belongs to the XPG/RAD2 endonuclease family. XPG subfamily.</text>
</comment>
<comment type="caution">
    <text evidence="27 33">A paper describing an additional role for this protein in a base excision repair pathway that is not coupled to transcription has been retracted, because some of the experimental data were incorrect.</text>
</comment>
<comment type="online information" name="Atlas of Genetics and Cytogenetics in Oncology and Haematology">
    <link uri="https://atlasgeneticsoncology.org/gene/300/XPG"/>
</comment>